<gene>
    <name evidence="1" type="primary">tig</name>
    <name type="ordered locus">Aave_1460</name>
</gene>
<proteinExistence type="inferred from homology"/>
<dbReference type="EC" id="5.2.1.8" evidence="1"/>
<dbReference type="EMBL" id="CP000512">
    <property type="protein sequence ID" value="ABM32051.1"/>
    <property type="molecule type" value="Genomic_DNA"/>
</dbReference>
<dbReference type="RefSeq" id="WP_011794601.1">
    <property type="nucleotide sequence ID" value="NC_008752.1"/>
</dbReference>
<dbReference type="SMR" id="A1TM63"/>
<dbReference type="STRING" id="397945.Aave_1460"/>
<dbReference type="GeneID" id="79791132"/>
<dbReference type="KEGG" id="aav:Aave_1460"/>
<dbReference type="eggNOG" id="COG0544">
    <property type="taxonomic scope" value="Bacteria"/>
</dbReference>
<dbReference type="HOGENOM" id="CLU_033058_2_0_4"/>
<dbReference type="OrthoDB" id="9767721at2"/>
<dbReference type="Proteomes" id="UP000002596">
    <property type="component" value="Chromosome"/>
</dbReference>
<dbReference type="GO" id="GO:0005737">
    <property type="term" value="C:cytoplasm"/>
    <property type="evidence" value="ECO:0007669"/>
    <property type="project" value="UniProtKB-SubCell"/>
</dbReference>
<dbReference type="GO" id="GO:0003755">
    <property type="term" value="F:peptidyl-prolyl cis-trans isomerase activity"/>
    <property type="evidence" value="ECO:0007669"/>
    <property type="project" value="UniProtKB-UniRule"/>
</dbReference>
<dbReference type="GO" id="GO:0044183">
    <property type="term" value="F:protein folding chaperone"/>
    <property type="evidence" value="ECO:0007669"/>
    <property type="project" value="TreeGrafter"/>
</dbReference>
<dbReference type="GO" id="GO:0043022">
    <property type="term" value="F:ribosome binding"/>
    <property type="evidence" value="ECO:0007669"/>
    <property type="project" value="TreeGrafter"/>
</dbReference>
<dbReference type="GO" id="GO:0051083">
    <property type="term" value="P:'de novo' cotranslational protein folding"/>
    <property type="evidence" value="ECO:0007669"/>
    <property type="project" value="TreeGrafter"/>
</dbReference>
<dbReference type="GO" id="GO:0051301">
    <property type="term" value="P:cell division"/>
    <property type="evidence" value="ECO:0007669"/>
    <property type="project" value="UniProtKB-KW"/>
</dbReference>
<dbReference type="GO" id="GO:0061077">
    <property type="term" value="P:chaperone-mediated protein folding"/>
    <property type="evidence" value="ECO:0007669"/>
    <property type="project" value="TreeGrafter"/>
</dbReference>
<dbReference type="GO" id="GO:0015031">
    <property type="term" value="P:protein transport"/>
    <property type="evidence" value="ECO:0007669"/>
    <property type="project" value="UniProtKB-UniRule"/>
</dbReference>
<dbReference type="GO" id="GO:0043335">
    <property type="term" value="P:protein unfolding"/>
    <property type="evidence" value="ECO:0007669"/>
    <property type="project" value="TreeGrafter"/>
</dbReference>
<dbReference type="FunFam" id="3.10.50.40:FF:000001">
    <property type="entry name" value="Trigger factor"/>
    <property type="match status" value="1"/>
</dbReference>
<dbReference type="Gene3D" id="3.10.50.40">
    <property type="match status" value="1"/>
</dbReference>
<dbReference type="Gene3D" id="3.30.70.1050">
    <property type="entry name" value="Trigger factor ribosome-binding domain"/>
    <property type="match status" value="1"/>
</dbReference>
<dbReference type="Gene3D" id="1.10.3120.10">
    <property type="entry name" value="Trigger factor, C-terminal domain"/>
    <property type="match status" value="1"/>
</dbReference>
<dbReference type="HAMAP" id="MF_00303">
    <property type="entry name" value="Trigger_factor_Tig"/>
    <property type="match status" value="1"/>
</dbReference>
<dbReference type="InterPro" id="IPR046357">
    <property type="entry name" value="PPIase_dom_sf"/>
</dbReference>
<dbReference type="InterPro" id="IPR001179">
    <property type="entry name" value="PPIase_FKBP_dom"/>
</dbReference>
<dbReference type="InterPro" id="IPR005215">
    <property type="entry name" value="Trig_fac"/>
</dbReference>
<dbReference type="InterPro" id="IPR008880">
    <property type="entry name" value="Trigger_fac_C"/>
</dbReference>
<dbReference type="InterPro" id="IPR037041">
    <property type="entry name" value="Trigger_fac_C_sf"/>
</dbReference>
<dbReference type="InterPro" id="IPR008881">
    <property type="entry name" value="Trigger_fac_ribosome-bd_bac"/>
</dbReference>
<dbReference type="InterPro" id="IPR036611">
    <property type="entry name" value="Trigger_fac_ribosome-bd_sf"/>
</dbReference>
<dbReference type="InterPro" id="IPR027304">
    <property type="entry name" value="Trigger_fact/SurA_dom_sf"/>
</dbReference>
<dbReference type="NCBIfam" id="TIGR00115">
    <property type="entry name" value="tig"/>
    <property type="match status" value="1"/>
</dbReference>
<dbReference type="PANTHER" id="PTHR30560">
    <property type="entry name" value="TRIGGER FACTOR CHAPERONE AND PEPTIDYL-PROLYL CIS/TRANS ISOMERASE"/>
    <property type="match status" value="1"/>
</dbReference>
<dbReference type="PANTHER" id="PTHR30560:SF3">
    <property type="entry name" value="TRIGGER FACTOR-LIKE PROTEIN TIG, CHLOROPLASTIC"/>
    <property type="match status" value="1"/>
</dbReference>
<dbReference type="Pfam" id="PF00254">
    <property type="entry name" value="FKBP_C"/>
    <property type="match status" value="1"/>
</dbReference>
<dbReference type="Pfam" id="PF05698">
    <property type="entry name" value="Trigger_C"/>
    <property type="match status" value="1"/>
</dbReference>
<dbReference type="Pfam" id="PF05697">
    <property type="entry name" value="Trigger_N"/>
    <property type="match status" value="1"/>
</dbReference>
<dbReference type="PIRSF" id="PIRSF003095">
    <property type="entry name" value="Trigger_factor"/>
    <property type="match status" value="1"/>
</dbReference>
<dbReference type="SUPFAM" id="SSF54534">
    <property type="entry name" value="FKBP-like"/>
    <property type="match status" value="1"/>
</dbReference>
<dbReference type="SUPFAM" id="SSF109998">
    <property type="entry name" value="Triger factor/SurA peptide-binding domain-like"/>
    <property type="match status" value="1"/>
</dbReference>
<dbReference type="SUPFAM" id="SSF102735">
    <property type="entry name" value="Trigger factor ribosome-binding domain"/>
    <property type="match status" value="1"/>
</dbReference>
<dbReference type="PROSITE" id="PS50059">
    <property type="entry name" value="FKBP_PPIASE"/>
    <property type="match status" value="1"/>
</dbReference>
<accession>A1TM63</accession>
<protein>
    <recommendedName>
        <fullName evidence="1">Trigger factor</fullName>
        <shortName evidence="1">TF</shortName>
        <ecNumber evidence="1">5.2.1.8</ecNumber>
    </recommendedName>
    <alternativeName>
        <fullName evidence="1">PPIase</fullName>
    </alternativeName>
</protein>
<feature type="chain" id="PRO_1000022634" description="Trigger factor">
    <location>
        <begin position="1"/>
        <end position="436"/>
    </location>
</feature>
<feature type="domain" description="PPIase FKBP-type" evidence="1">
    <location>
        <begin position="163"/>
        <end position="248"/>
    </location>
</feature>
<reference key="1">
    <citation type="submission" date="2006-12" db="EMBL/GenBank/DDBJ databases">
        <title>Complete sequence of Acidovorax avenae subsp. citrulli AAC00-1.</title>
        <authorList>
            <person name="Copeland A."/>
            <person name="Lucas S."/>
            <person name="Lapidus A."/>
            <person name="Barry K."/>
            <person name="Detter J.C."/>
            <person name="Glavina del Rio T."/>
            <person name="Dalin E."/>
            <person name="Tice H."/>
            <person name="Pitluck S."/>
            <person name="Kiss H."/>
            <person name="Brettin T."/>
            <person name="Bruce D."/>
            <person name="Han C."/>
            <person name="Tapia R."/>
            <person name="Gilna P."/>
            <person name="Schmutz J."/>
            <person name="Larimer F."/>
            <person name="Land M."/>
            <person name="Hauser L."/>
            <person name="Kyrpides N."/>
            <person name="Kim E."/>
            <person name="Stahl D."/>
            <person name="Richardson P."/>
        </authorList>
    </citation>
    <scope>NUCLEOTIDE SEQUENCE [LARGE SCALE GENOMIC DNA]</scope>
    <source>
        <strain>AAC00-1</strain>
    </source>
</reference>
<name>TIG_PARC0</name>
<sequence length="436" mass="48122">MAVTVETLEKLERKITLSLPLTAIQSEVDSRLKRLARTVKMDGFRPGKVPMNVVAQRYGYSVQYEVLNDKVGEAFAQAANEANLRVAGQPRITEKEGAPEGQVTFDAVFEVFPEVKIGDLSTADVEKISADVTDAAIDKTIDILRKQRRTFAQRAQGTPAEDGDRVTVDFEGKIDGETFSGGKAEDFQFLVGEGQMLKEFEDAVRGMKAGESKTFPLAFPEDYHGKDVAGKTADFLVTVKKIEAAHLPEVNEQLAKSLGIADGTVEGLRADIKKNLEREVKFRLLARNKQAVMEALVSKAELDLPNASVQAEIARLLEGARADLKQRGIKDADKAEIPEDVFRPQAERRVRLGLVVAELVRANNLHATPEQLKAHVDELAASYEKPEDVVRWYFGDRQRLAEVEAVVIENNVTAFVLDKAKVTEKAISFDELMGQG</sequence>
<evidence type="ECO:0000255" key="1">
    <source>
        <dbReference type="HAMAP-Rule" id="MF_00303"/>
    </source>
</evidence>
<organism>
    <name type="scientific">Paracidovorax citrulli (strain AAC00-1)</name>
    <name type="common">Acidovorax citrulli</name>
    <dbReference type="NCBI Taxonomy" id="397945"/>
    <lineage>
        <taxon>Bacteria</taxon>
        <taxon>Pseudomonadati</taxon>
        <taxon>Pseudomonadota</taxon>
        <taxon>Betaproteobacteria</taxon>
        <taxon>Burkholderiales</taxon>
        <taxon>Comamonadaceae</taxon>
        <taxon>Paracidovorax</taxon>
    </lineage>
</organism>
<comment type="function">
    <text evidence="1">Involved in protein export. Acts as a chaperone by maintaining the newly synthesized protein in an open conformation. Functions as a peptidyl-prolyl cis-trans isomerase.</text>
</comment>
<comment type="catalytic activity">
    <reaction evidence="1">
        <text>[protein]-peptidylproline (omega=180) = [protein]-peptidylproline (omega=0)</text>
        <dbReference type="Rhea" id="RHEA:16237"/>
        <dbReference type="Rhea" id="RHEA-COMP:10747"/>
        <dbReference type="Rhea" id="RHEA-COMP:10748"/>
        <dbReference type="ChEBI" id="CHEBI:83833"/>
        <dbReference type="ChEBI" id="CHEBI:83834"/>
        <dbReference type="EC" id="5.2.1.8"/>
    </reaction>
</comment>
<comment type="subcellular location">
    <subcellularLocation>
        <location>Cytoplasm</location>
    </subcellularLocation>
    <text evidence="1">About half TF is bound to the ribosome near the polypeptide exit tunnel while the other half is free in the cytoplasm.</text>
</comment>
<comment type="domain">
    <text evidence="1">Consists of 3 domains; the N-terminus binds the ribosome, the middle domain has PPIase activity, while the C-terminus has intrinsic chaperone activity on its own.</text>
</comment>
<comment type="similarity">
    <text evidence="1">Belongs to the FKBP-type PPIase family. Tig subfamily.</text>
</comment>
<keyword id="KW-0131">Cell cycle</keyword>
<keyword id="KW-0132">Cell division</keyword>
<keyword id="KW-0143">Chaperone</keyword>
<keyword id="KW-0963">Cytoplasm</keyword>
<keyword id="KW-0413">Isomerase</keyword>
<keyword id="KW-0697">Rotamase</keyword>